<feature type="signal peptide" evidence="1">
    <location>
        <begin position="1"/>
        <end position="26"/>
    </location>
</feature>
<feature type="chain" id="PRO_5000654427" description="Cystatin">
    <location>
        <begin position="27"/>
        <end position="141"/>
    </location>
</feature>
<feature type="domain" description="Cystatin">
    <location>
        <begin position="29"/>
        <end position="129"/>
    </location>
</feature>
<feature type="short sequence motif" description="Secondary area of contact" evidence="1">
    <location>
        <begin position="73"/>
        <end position="77"/>
    </location>
</feature>
<feature type="site" description="Reactive site" evidence="1">
    <location>
        <position position="29"/>
    </location>
</feature>
<feature type="disulfide bond" evidence="1">
    <location>
        <begin position="91"/>
        <end position="107"/>
    </location>
</feature>
<feature type="disulfide bond" evidence="1">
    <location>
        <begin position="120"/>
        <end position="140"/>
    </location>
</feature>
<sequence length="141" mass="15896">MVHSQLPVVALLRLLCALLLLPSATMIPGGLSPRSVTDPDVQEAAEFAVQEYNALSANAYYYKQLRIVEAQSQVVAGAKYYLTMELMKTKCAKTTGKPKVYKEIQNCELPPKAQQEKLTCRFQVWSRPWLQKIELTKMSCN</sequence>
<organism>
    <name type="scientific">Notechis scutatus scutatus</name>
    <name type="common">Mainland tiger snake</name>
    <name type="synonym">Common tiger snake</name>
    <dbReference type="NCBI Taxonomy" id="70142"/>
    <lineage>
        <taxon>Eukaryota</taxon>
        <taxon>Metazoa</taxon>
        <taxon>Chordata</taxon>
        <taxon>Craniata</taxon>
        <taxon>Vertebrata</taxon>
        <taxon>Euteleostomi</taxon>
        <taxon>Lepidosauria</taxon>
        <taxon>Squamata</taxon>
        <taxon>Bifurcata</taxon>
        <taxon>Unidentata</taxon>
        <taxon>Episquamata</taxon>
        <taxon>Toxicofera</taxon>
        <taxon>Serpentes</taxon>
        <taxon>Colubroidea</taxon>
        <taxon>Elapidae</taxon>
        <taxon>Hydrophiinae</taxon>
        <taxon>Notechis</taxon>
    </lineage>
</organism>
<reference key="1">
    <citation type="journal article" date="2011" name="Biochimie">
        <title>Cloning and characterisation of novel cystatins from elapid snake venom glands.</title>
        <authorList>
            <person name="Richards R."/>
            <person name="St Pierre L."/>
            <person name="Trabi M."/>
            <person name="Johnson L.A."/>
            <person name="de Jersey J."/>
            <person name="Masci P.P."/>
            <person name="Lavin M.F."/>
        </authorList>
    </citation>
    <scope>NUCLEOTIDE SEQUENCE [MRNA]</scope>
    <scope>LEVEL OF PROTEIN EXPRESSION</scope>
    <source>
        <tissue>Venom</tissue>
        <tissue>Venom gland</tissue>
    </source>
</reference>
<evidence type="ECO:0000250" key="1"/>
<evidence type="ECO:0000305" key="2"/>
<evidence type="ECO:0000305" key="3">
    <source>
    </source>
</evidence>
<protein>
    <recommendedName>
        <fullName>Cystatin</fullName>
    </recommendedName>
</protein>
<comment type="function">
    <text evidence="1">Inhibits various C1 cysteine proteases including cathepsin L, papain and cathepsin B. This protein has no toxic activity and its function in the venom is unknown. It may play a role as a housekeeping or regulatory protein (By similarity).</text>
</comment>
<comment type="subcellular location">
    <subcellularLocation>
        <location>Secreted</location>
    </subcellularLocation>
</comment>
<comment type="tissue specificity">
    <text evidence="3">Expressed at a low level by the venom gland (at protein level).</text>
</comment>
<comment type="miscellaneous">
    <text evidence="1">Negative results: the recombinant protein does not inhibit calpain-1 (CAPN1), a C2 family cysteine protease and legumain (LGMN), a C13 family cysteine protease. Does not provoke cell death (PC3 prostrate cancer cells) (By similarity).</text>
</comment>
<comment type="similarity">
    <text evidence="2">Belongs to the cystatin family.</text>
</comment>
<keyword id="KW-1015">Disulfide bond</keyword>
<keyword id="KW-0646">Protease inhibitor</keyword>
<keyword id="KW-0964">Secreted</keyword>
<keyword id="KW-0732">Signal</keyword>
<keyword id="KW-0789">Thiol protease inhibitor</keyword>
<dbReference type="EMBL" id="FJ411287">
    <property type="protein sequence ID" value="ACR83848.1"/>
    <property type="molecule type" value="mRNA"/>
</dbReference>
<dbReference type="SMR" id="E3P6P2"/>
<dbReference type="MEROPS" id="I25.012"/>
<dbReference type="GO" id="GO:0070062">
    <property type="term" value="C:extracellular exosome"/>
    <property type="evidence" value="ECO:0007669"/>
    <property type="project" value="TreeGrafter"/>
</dbReference>
<dbReference type="GO" id="GO:0004869">
    <property type="term" value="F:cysteine-type endopeptidase inhibitor activity"/>
    <property type="evidence" value="ECO:0007669"/>
    <property type="project" value="UniProtKB-KW"/>
</dbReference>
<dbReference type="CDD" id="cd00042">
    <property type="entry name" value="CY"/>
    <property type="match status" value="1"/>
</dbReference>
<dbReference type="FunFam" id="3.10.450.10:FF:000004">
    <property type="entry name" value="Cystatin C"/>
    <property type="match status" value="1"/>
</dbReference>
<dbReference type="Gene3D" id="3.10.450.10">
    <property type="match status" value="1"/>
</dbReference>
<dbReference type="InterPro" id="IPR000010">
    <property type="entry name" value="Cystatin_dom"/>
</dbReference>
<dbReference type="InterPro" id="IPR046350">
    <property type="entry name" value="Cystatin_sf"/>
</dbReference>
<dbReference type="InterPro" id="IPR018073">
    <property type="entry name" value="Prot_inh_cystat_CS"/>
</dbReference>
<dbReference type="PANTHER" id="PTHR47033">
    <property type="entry name" value="CYSTATIN-M"/>
    <property type="match status" value="1"/>
</dbReference>
<dbReference type="PANTHER" id="PTHR47033:SF1">
    <property type="entry name" value="CYSTATIN-M"/>
    <property type="match status" value="1"/>
</dbReference>
<dbReference type="Pfam" id="PF00031">
    <property type="entry name" value="Cystatin"/>
    <property type="match status" value="1"/>
</dbReference>
<dbReference type="SMART" id="SM00043">
    <property type="entry name" value="CY"/>
    <property type="match status" value="1"/>
</dbReference>
<dbReference type="SUPFAM" id="SSF54403">
    <property type="entry name" value="Cystatin/monellin"/>
    <property type="match status" value="1"/>
</dbReference>
<dbReference type="PROSITE" id="PS00287">
    <property type="entry name" value="CYSTATIN"/>
    <property type="match status" value="1"/>
</dbReference>
<name>CYT_NOTSC</name>
<accession>E3P6P2</accession>
<proteinExistence type="evidence at protein level"/>